<comment type="function">
    <text evidence="1">One of the primary rRNA binding proteins, it binds directly to 16S rRNA where it nucleates assembly of the head domain of the 30S subunit. Is located at the subunit interface close to the decoding center, probably blocks exit of the E-site tRNA.</text>
</comment>
<comment type="subunit">
    <text evidence="1">Part of the 30S ribosomal subunit. Contacts proteins S9 and S11.</text>
</comment>
<comment type="similarity">
    <text evidence="1">Belongs to the universal ribosomal protein uS7 family.</text>
</comment>
<gene>
    <name evidence="1" type="primary">rpsG</name>
    <name type="ordered locus">MCAP_0152</name>
</gene>
<protein>
    <recommendedName>
        <fullName evidence="1">Small ribosomal subunit protein uS7</fullName>
    </recommendedName>
    <alternativeName>
        <fullName evidence="2">30S ribosomal protein S7</fullName>
    </alternativeName>
</protein>
<sequence>MRKNRAEKRDVLADPIYNSKLVTRAINKIMLDGKRGIAQSIIYDAFNIIKEKTNKEPIEVFNKAIENIKPHLELKVRRIGGANYQVPVEVSAERQITLALRWLINYARLRNEKVMTIKLANEIIDASNNIGGSVKKREDTHKMAEANKAFAHYRW</sequence>
<organism>
    <name type="scientific">Mycoplasma capricolum subsp. capricolum (strain California kid / ATCC 27343 / NCTC 10154)</name>
    <dbReference type="NCBI Taxonomy" id="340047"/>
    <lineage>
        <taxon>Bacteria</taxon>
        <taxon>Bacillati</taxon>
        <taxon>Mycoplasmatota</taxon>
        <taxon>Mollicutes</taxon>
        <taxon>Mycoplasmataceae</taxon>
        <taxon>Mycoplasma</taxon>
    </lineage>
</organism>
<accession>Q2SSX0</accession>
<feature type="chain" id="PRO_0000241762" description="Small ribosomal subunit protein uS7">
    <location>
        <begin position="1"/>
        <end position="155"/>
    </location>
</feature>
<name>RS7_MYCCT</name>
<proteinExistence type="inferred from homology"/>
<keyword id="KW-0687">Ribonucleoprotein</keyword>
<keyword id="KW-0689">Ribosomal protein</keyword>
<keyword id="KW-0694">RNA-binding</keyword>
<keyword id="KW-0699">rRNA-binding</keyword>
<keyword id="KW-0820">tRNA-binding</keyword>
<dbReference type="EMBL" id="CP000123">
    <property type="protein sequence ID" value="ABC01748.1"/>
    <property type="molecule type" value="Genomic_DNA"/>
</dbReference>
<dbReference type="RefSeq" id="WP_008362394.1">
    <property type="nucleotide sequence ID" value="NC_007633.1"/>
</dbReference>
<dbReference type="SMR" id="Q2SSX0"/>
<dbReference type="GeneID" id="93426636"/>
<dbReference type="KEGG" id="mcp:MCAP_0152"/>
<dbReference type="HOGENOM" id="CLU_072226_1_1_14"/>
<dbReference type="PhylomeDB" id="Q2SSX0"/>
<dbReference type="Proteomes" id="UP000001928">
    <property type="component" value="Chromosome"/>
</dbReference>
<dbReference type="GO" id="GO:0015935">
    <property type="term" value="C:small ribosomal subunit"/>
    <property type="evidence" value="ECO:0007669"/>
    <property type="project" value="InterPro"/>
</dbReference>
<dbReference type="GO" id="GO:0019843">
    <property type="term" value="F:rRNA binding"/>
    <property type="evidence" value="ECO:0007669"/>
    <property type="project" value="UniProtKB-UniRule"/>
</dbReference>
<dbReference type="GO" id="GO:0003735">
    <property type="term" value="F:structural constituent of ribosome"/>
    <property type="evidence" value="ECO:0007669"/>
    <property type="project" value="InterPro"/>
</dbReference>
<dbReference type="GO" id="GO:0000049">
    <property type="term" value="F:tRNA binding"/>
    <property type="evidence" value="ECO:0007669"/>
    <property type="project" value="UniProtKB-UniRule"/>
</dbReference>
<dbReference type="GO" id="GO:0006412">
    <property type="term" value="P:translation"/>
    <property type="evidence" value="ECO:0007669"/>
    <property type="project" value="UniProtKB-UniRule"/>
</dbReference>
<dbReference type="CDD" id="cd14869">
    <property type="entry name" value="uS7_Bacteria"/>
    <property type="match status" value="1"/>
</dbReference>
<dbReference type="FunFam" id="1.10.455.10:FF:000001">
    <property type="entry name" value="30S ribosomal protein S7"/>
    <property type="match status" value="1"/>
</dbReference>
<dbReference type="Gene3D" id="1.10.455.10">
    <property type="entry name" value="Ribosomal protein S7 domain"/>
    <property type="match status" value="1"/>
</dbReference>
<dbReference type="HAMAP" id="MF_00480_B">
    <property type="entry name" value="Ribosomal_uS7_B"/>
    <property type="match status" value="1"/>
</dbReference>
<dbReference type="InterPro" id="IPR000235">
    <property type="entry name" value="Ribosomal_uS7"/>
</dbReference>
<dbReference type="InterPro" id="IPR005717">
    <property type="entry name" value="Ribosomal_uS7_bac/org-type"/>
</dbReference>
<dbReference type="InterPro" id="IPR020606">
    <property type="entry name" value="Ribosomal_uS7_CS"/>
</dbReference>
<dbReference type="InterPro" id="IPR023798">
    <property type="entry name" value="Ribosomal_uS7_dom"/>
</dbReference>
<dbReference type="InterPro" id="IPR036823">
    <property type="entry name" value="Ribosomal_uS7_dom_sf"/>
</dbReference>
<dbReference type="NCBIfam" id="TIGR01029">
    <property type="entry name" value="rpsG_bact"/>
    <property type="match status" value="1"/>
</dbReference>
<dbReference type="PANTHER" id="PTHR11205">
    <property type="entry name" value="RIBOSOMAL PROTEIN S7"/>
    <property type="match status" value="1"/>
</dbReference>
<dbReference type="Pfam" id="PF00177">
    <property type="entry name" value="Ribosomal_S7"/>
    <property type="match status" value="1"/>
</dbReference>
<dbReference type="PIRSF" id="PIRSF002122">
    <property type="entry name" value="RPS7p_RPS7a_RPS5e_RPS7o"/>
    <property type="match status" value="1"/>
</dbReference>
<dbReference type="SUPFAM" id="SSF47973">
    <property type="entry name" value="Ribosomal protein S7"/>
    <property type="match status" value="1"/>
</dbReference>
<dbReference type="PROSITE" id="PS00052">
    <property type="entry name" value="RIBOSOMAL_S7"/>
    <property type="match status" value="1"/>
</dbReference>
<reference key="1">
    <citation type="submission" date="2005-09" db="EMBL/GenBank/DDBJ databases">
        <authorList>
            <person name="Glass J.I."/>
            <person name="Lartigue C."/>
            <person name="Pfannkoch C."/>
            <person name="Baden-Tillson H."/>
            <person name="Smith H.O."/>
            <person name="Venter J.C."/>
            <person name="Roske K."/>
            <person name="Wise K.S."/>
            <person name="Calcutt M.J."/>
            <person name="Nelson W.C."/>
            <person name="Nierman W.C."/>
        </authorList>
    </citation>
    <scope>NUCLEOTIDE SEQUENCE [LARGE SCALE GENOMIC DNA]</scope>
    <source>
        <strain>California kid / ATCC 27343 / NCTC 10154</strain>
    </source>
</reference>
<evidence type="ECO:0000255" key="1">
    <source>
        <dbReference type="HAMAP-Rule" id="MF_00480"/>
    </source>
</evidence>
<evidence type="ECO:0000305" key="2"/>